<dbReference type="EC" id="3.6.5.3" evidence="2"/>
<dbReference type="EMBL" id="CP000562">
    <property type="protein sequence ID" value="ABN56663.1"/>
    <property type="molecule type" value="Genomic_DNA"/>
</dbReference>
<dbReference type="RefSeq" id="WP_011843574.1">
    <property type="nucleotide sequence ID" value="NC_009051.1"/>
</dbReference>
<dbReference type="SMR" id="A3CTG3"/>
<dbReference type="STRING" id="368407.Memar_0730"/>
<dbReference type="GeneID" id="4848280"/>
<dbReference type="GeneID" id="76731300"/>
<dbReference type="KEGG" id="mem:Memar_0730"/>
<dbReference type="eggNOG" id="arCOG01561">
    <property type="taxonomic scope" value="Archaea"/>
</dbReference>
<dbReference type="HOGENOM" id="CLU_007265_3_5_2"/>
<dbReference type="OrthoDB" id="371718at2157"/>
<dbReference type="Proteomes" id="UP000002146">
    <property type="component" value="Chromosome"/>
</dbReference>
<dbReference type="GO" id="GO:0005737">
    <property type="term" value="C:cytoplasm"/>
    <property type="evidence" value="ECO:0007669"/>
    <property type="project" value="UniProtKB-SubCell"/>
</dbReference>
<dbReference type="GO" id="GO:0005525">
    <property type="term" value="F:GTP binding"/>
    <property type="evidence" value="ECO:0007669"/>
    <property type="project" value="UniProtKB-UniRule"/>
</dbReference>
<dbReference type="GO" id="GO:0003924">
    <property type="term" value="F:GTPase activity"/>
    <property type="evidence" value="ECO:0007669"/>
    <property type="project" value="InterPro"/>
</dbReference>
<dbReference type="GO" id="GO:0003746">
    <property type="term" value="F:translation elongation factor activity"/>
    <property type="evidence" value="ECO:0007669"/>
    <property type="project" value="UniProtKB-UniRule"/>
</dbReference>
<dbReference type="CDD" id="cd01883">
    <property type="entry name" value="EF1_alpha"/>
    <property type="match status" value="1"/>
</dbReference>
<dbReference type="CDD" id="cd03693">
    <property type="entry name" value="EF1_alpha_II"/>
    <property type="match status" value="1"/>
</dbReference>
<dbReference type="CDD" id="cd03705">
    <property type="entry name" value="EF1_alpha_III"/>
    <property type="match status" value="1"/>
</dbReference>
<dbReference type="FunFam" id="2.40.30.10:FF:000003">
    <property type="entry name" value="Elongation factor 1-alpha"/>
    <property type="match status" value="1"/>
</dbReference>
<dbReference type="FunFam" id="2.40.30.10:FF:000005">
    <property type="entry name" value="Elongation factor 1-alpha"/>
    <property type="match status" value="1"/>
</dbReference>
<dbReference type="Gene3D" id="3.40.50.300">
    <property type="entry name" value="P-loop containing nucleotide triphosphate hydrolases"/>
    <property type="match status" value="1"/>
</dbReference>
<dbReference type="Gene3D" id="2.40.30.10">
    <property type="entry name" value="Translation factors"/>
    <property type="match status" value="2"/>
</dbReference>
<dbReference type="HAMAP" id="MF_00118_A">
    <property type="entry name" value="EF_Tu_A"/>
    <property type="match status" value="1"/>
</dbReference>
<dbReference type="InterPro" id="IPR004161">
    <property type="entry name" value="EFTu-like_2"/>
</dbReference>
<dbReference type="InterPro" id="IPR031157">
    <property type="entry name" value="G_TR_CS"/>
</dbReference>
<dbReference type="InterPro" id="IPR054696">
    <property type="entry name" value="GTP-eEF1A_C"/>
</dbReference>
<dbReference type="InterPro" id="IPR027417">
    <property type="entry name" value="P-loop_NTPase"/>
</dbReference>
<dbReference type="InterPro" id="IPR005225">
    <property type="entry name" value="Small_GTP-bd"/>
</dbReference>
<dbReference type="InterPro" id="IPR000795">
    <property type="entry name" value="T_Tr_GTP-bd_dom"/>
</dbReference>
<dbReference type="InterPro" id="IPR050100">
    <property type="entry name" value="TRAFAC_GTPase_members"/>
</dbReference>
<dbReference type="InterPro" id="IPR009000">
    <property type="entry name" value="Transl_B-barrel_sf"/>
</dbReference>
<dbReference type="InterPro" id="IPR009001">
    <property type="entry name" value="Transl_elong_EF1A/Init_IF2_C"/>
</dbReference>
<dbReference type="InterPro" id="IPR004539">
    <property type="entry name" value="Transl_elong_EF1A_euk/arc"/>
</dbReference>
<dbReference type="NCBIfam" id="TIGR00483">
    <property type="entry name" value="EF-1_alpha"/>
    <property type="match status" value="1"/>
</dbReference>
<dbReference type="NCBIfam" id="NF008969">
    <property type="entry name" value="PRK12317.1"/>
    <property type="match status" value="1"/>
</dbReference>
<dbReference type="NCBIfam" id="TIGR00231">
    <property type="entry name" value="small_GTP"/>
    <property type="match status" value="1"/>
</dbReference>
<dbReference type="PANTHER" id="PTHR23115">
    <property type="entry name" value="TRANSLATION FACTOR"/>
    <property type="match status" value="1"/>
</dbReference>
<dbReference type="Pfam" id="PF22594">
    <property type="entry name" value="GTP-eEF1A_C"/>
    <property type="match status" value="1"/>
</dbReference>
<dbReference type="Pfam" id="PF00009">
    <property type="entry name" value="GTP_EFTU"/>
    <property type="match status" value="1"/>
</dbReference>
<dbReference type="Pfam" id="PF03144">
    <property type="entry name" value="GTP_EFTU_D2"/>
    <property type="match status" value="1"/>
</dbReference>
<dbReference type="PRINTS" id="PR00315">
    <property type="entry name" value="ELONGATNFCT"/>
</dbReference>
<dbReference type="SUPFAM" id="SSF50465">
    <property type="entry name" value="EF-Tu/eEF-1alpha/eIF2-gamma C-terminal domain"/>
    <property type="match status" value="1"/>
</dbReference>
<dbReference type="SUPFAM" id="SSF52540">
    <property type="entry name" value="P-loop containing nucleoside triphosphate hydrolases"/>
    <property type="match status" value="1"/>
</dbReference>
<dbReference type="SUPFAM" id="SSF50447">
    <property type="entry name" value="Translation proteins"/>
    <property type="match status" value="1"/>
</dbReference>
<dbReference type="PROSITE" id="PS00301">
    <property type="entry name" value="G_TR_1"/>
    <property type="match status" value="1"/>
</dbReference>
<dbReference type="PROSITE" id="PS51722">
    <property type="entry name" value="G_TR_2"/>
    <property type="match status" value="1"/>
</dbReference>
<protein>
    <recommendedName>
        <fullName evidence="2">Elongation factor 1-alpha</fullName>
        <shortName evidence="2">EF-1-alpha</shortName>
        <ecNumber evidence="2">3.6.5.3</ecNumber>
    </recommendedName>
    <alternativeName>
        <fullName evidence="2">Elongation factor Tu</fullName>
        <shortName evidence="2">EF-Tu</shortName>
    </alternativeName>
</protein>
<organism>
    <name type="scientific">Methanoculleus marisnigri (strain ATCC 35101 / DSM 1498 / JR1)</name>
    <dbReference type="NCBI Taxonomy" id="368407"/>
    <lineage>
        <taxon>Archaea</taxon>
        <taxon>Methanobacteriati</taxon>
        <taxon>Methanobacteriota</taxon>
        <taxon>Stenosarchaea group</taxon>
        <taxon>Methanomicrobia</taxon>
        <taxon>Methanomicrobiales</taxon>
        <taxon>Methanomicrobiaceae</taxon>
        <taxon>Methanoculleus</taxon>
    </lineage>
</organism>
<evidence type="ECO:0000250" key="1"/>
<evidence type="ECO:0000255" key="2">
    <source>
        <dbReference type="HAMAP-Rule" id="MF_00118"/>
    </source>
</evidence>
<reference key="1">
    <citation type="journal article" date="2009" name="Stand. Genomic Sci.">
        <title>Complete genome sequence of Methanoculleus marisnigri Romesser et al. 1981 type strain JR1.</title>
        <authorList>
            <person name="Anderson I.J."/>
            <person name="Sieprawska-Lupa M."/>
            <person name="Lapidus A."/>
            <person name="Nolan M."/>
            <person name="Copeland A."/>
            <person name="Glavina Del Rio T."/>
            <person name="Tice H."/>
            <person name="Dalin E."/>
            <person name="Barry K."/>
            <person name="Saunders E."/>
            <person name="Han C."/>
            <person name="Brettin T."/>
            <person name="Detter J.C."/>
            <person name="Bruce D."/>
            <person name="Mikhailova N."/>
            <person name="Pitluck S."/>
            <person name="Hauser L."/>
            <person name="Land M."/>
            <person name="Lucas S."/>
            <person name="Richardson P."/>
            <person name="Whitman W.B."/>
            <person name="Kyrpides N.C."/>
        </authorList>
    </citation>
    <scope>NUCLEOTIDE SEQUENCE [LARGE SCALE GENOMIC DNA]</scope>
    <source>
        <strain>ATCC 35101 / DSM 1498 / JR1</strain>
    </source>
</reference>
<feature type="chain" id="PRO_1000015692" description="Elongation factor 1-alpha">
    <location>
        <begin position="1"/>
        <end position="425"/>
    </location>
</feature>
<feature type="domain" description="tr-type G">
    <location>
        <begin position="5"/>
        <end position="221"/>
    </location>
</feature>
<feature type="region of interest" description="G1" evidence="1">
    <location>
        <begin position="14"/>
        <end position="21"/>
    </location>
</feature>
<feature type="region of interest" description="G2" evidence="1">
    <location>
        <begin position="70"/>
        <end position="74"/>
    </location>
</feature>
<feature type="region of interest" description="G3" evidence="1">
    <location>
        <begin position="91"/>
        <end position="94"/>
    </location>
</feature>
<feature type="region of interest" description="G4" evidence="1">
    <location>
        <begin position="146"/>
        <end position="149"/>
    </location>
</feature>
<feature type="region of interest" description="G5" evidence="1">
    <location>
        <begin position="185"/>
        <end position="187"/>
    </location>
</feature>
<feature type="binding site" evidence="2">
    <location>
        <begin position="14"/>
        <end position="21"/>
    </location>
    <ligand>
        <name>GTP</name>
        <dbReference type="ChEBI" id="CHEBI:37565"/>
    </ligand>
</feature>
<feature type="binding site" evidence="2">
    <location>
        <position position="21"/>
    </location>
    <ligand>
        <name>Mg(2+)</name>
        <dbReference type="ChEBI" id="CHEBI:18420"/>
    </ligand>
</feature>
<feature type="binding site" evidence="2">
    <location>
        <begin position="91"/>
        <end position="95"/>
    </location>
    <ligand>
        <name>GTP</name>
        <dbReference type="ChEBI" id="CHEBI:37565"/>
    </ligand>
</feature>
<feature type="binding site" evidence="2">
    <location>
        <begin position="146"/>
        <end position="149"/>
    </location>
    <ligand>
        <name>GTP</name>
        <dbReference type="ChEBI" id="CHEBI:37565"/>
    </ligand>
</feature>
<proteinExistence type="inferred from homology"/>
<keyword id="KW-0963">Cytoplasm</keyword>
<keyword id="KW-0251">Elongation factor</keyword>
<keyword id="KW-0342">GTP-binding</keyword>
<keyword id="KW-0378">Hydrolase</keyword>
<keyword id="KW-0460">Magnesium</keyword>
<keyword id="KW-0479">Metal-binding</keyword>
<keyword id="KW-0547">Nucleotide-binding</keyword>
<keyword id="KW-0648">Protein biosynthesis</keyword>
<accession>A3CTG3</accession>
<name>EF1A_METMJ</name>
<gene>
    <name evidence="2" type="primary">tuf</name>
    <name type="ordered locus">Memar_0730</name>
</gene>
<sequence>MAAEKPHMNLAVIGHIDHGKSTTVGRLLFETGTVPPHIIESFRKEAESKGKGSFEFAWVMDSLKEERERGITIDIAHKRFDTDKYYFTVVDCPGHRDFVKNMITGASQADAALLVVAAPDGVMEQTKEHVFLSRTLGINQLIIGINKMDAAKYDEKRYNEVKEQLSQLLKMVGYKPDDISFIPMSAFVGDNIAKKSENTPWYKGPTVLDALNALSEPEKPTNLPMRLPIQDVYSISGIGTVPVGRVETGIMKKGMKVSFMPANKEGEIKSIEMHHEEIPQALPGDNVGFNVRGIGKGDIRRGDVCGPSDVPPTVAEEFIAQVVVLHHPSALTVGYTPVFHCHTAQIACSFVELMKKLDPRTGQVKEENPTFLKTGDAAIVKIRPTQPMVIEKVKEIPQLGRFAVRDMGSTIAAGVCMDITPKQMR</sequence>
<comment type="function">
    <text evidence="2">GTP hydrolase that promotes the GTP-dependent binding of aminoacyl-tRNA to the A-site of ribosomes during protein biosynthesis.</text>
</comment>
<comment type="catalytic activity">
    <reaction evidence="2">
        <text>GTP + H2O = GDP + phosphate + H(+)</text>
        <dbReference type="Rhea" id="RHEA:19669"/>
        <dbReference type="ChEBI" id="CHEBI:15377"/>
        <dbReference type="ChEBI" id="CHEBI:15378"/>
        <dbReference type="ChEBI" id="CHEBI:37565"/>
        <dbReference type="ChEBI" id="CHEBI:43474"/>
        <dbReference type="ChEBI" id="CHEBI:58189"/>
        <dbReference type="EC" id="3.6.5.3"/>
    </reaction>
    <physiologicalReaction direction="left-to-right" evidence="2">
        <dbReference type="Rhea" id="RHEA:19670"/>
    </physiologicalReaction>
</comment>
<comment type="subcellular location">
    <subcellularLocation>
        <location evidence="2">Cytoplasm</location>
    </subcellularLocation>
</comment>
<comment type="similarity">
    <text evidence="2">Belongs to the TRAFAC class translation factor GTPase superfamily. Classic translation factor GTPase family. EF-Tu/EF-1A subfamily.</text>
</comment>